<feature type="chain" id="PRO_1000062041" description="Probable transcriptional regulatory protein Spro_2779">
    <location>
        <begin position="1"/>
        <end position="247"/>
    </location>
</feature>
<dbReference type="EMBL" id="CP000826">
    <property type="protein sequence ID" value="ABV41880.1"/>
    <property type="molecule type" value="Genomic_DNA"/>
</dbReference>
<dbReference type="SMR" id="A8GFJ0"/>
<dbReference type="STRING" id="399741.Spro_2779"/>
<dbReference type="KEGG" id="spe:Spro_2779"/>
<dbReference type="eggNOG" id="COG0217">
    <property type="taxonomic scope" value="Bacteria"/>
</dbReference>
<dbReference type="HOGENOM" id="CLU_062974_2_2_6"/>
<dbReference type="OrthoDB" id="9781053at2"/>
<dbReference type="GO" id="GO:0005829">
    <property type="term" value="C:cytosol"/>
    <property type="evidence" value="ECO:0007669"/>
    <property type="project" value="TreeGrafter"/>
</dbReference>
<dbReference type="GO" id="GO:0003677">
    <property type="term" value="F:DNA binding"/>
    <property type="evidence" value="ECO:0007669"/>
    <property type="project" value="UniProtKB-UniRule"/>
</dbReference>
<dbReference type="GO" id="GO:0006355">
    <property type="term" value="P:regulation of DNA-templated transcription"/>
    <property type="evidence" value="ECO:0007669"/>
    <property type="project" value="UniProtKB-UniRule"/>
</dbReference>
<dbReference type="FunFam" id="1.10.10.200:FF:000001">
    <property type="entry name" value="Probable transcriptional regulatory protein YebC"/>
    <property type="match status" value="1"/>
</dbReference>
<dbReference type="FunFam" id="3.30.70.980:FF:000002">
    <property type="entry name" value="Probable transcriptional regulatory protein YebC"/>
    <property type="match status" value="1"/>
</dbReference>
<dbReference type="Gene3D" id="1.10.10.200">
    <property type="match status" value="1"/>
</dbReference>
<dbReference type="Gene3D" id="3.30.70.980">
    <property type="match status" value="2"/>
</dbReference>
<dbReference type="HAMAP" id="MF_00693">
    <property type="entry name" value="Transcrip_reg_TACO1"/>
    <property type="match status" value="1"/>
</dbReference>
<dbReference type="InterPro" id="IPR017856">
    <property type="entry name" value="Integrase-like_N"/>
</dbReference>
<dbReference type="InterPro" id="IPR048300">
    <property type="entry name" value="TACO1_YebC-like_2nd/3rd_dom"/>
</dbReference>
<dbReference type="InterPro" id="IPR049083">
    <property type="entry name" value="TACO1_YebC_N"/>
</dbReference>
<dbReference type="InterPro" id="IPR002876">
    <property type="entry name" value="Transcrip_reg_TACO1-like"/>
</dbReference>
<dbReference type="InterPro" id="IPR026564">
    <property type="entry name" value="Transcrip_reg_TACO1-like_dom3"/>
</dbReference>
<dbReference type="InterPro" id="IPR029072">
    <property type="entry name" value="YebC-like"/>
</dbReference>
<dbReference type="NCBIfam" id="NF001030">
    <property type="entry name" value="PRK00110.1"/>
    <property type="match status" value="1"/>
</dbReference>
<dbReference type="NCBIfam" id="NF009044">
    <property type="entry name" value="PRK12378.1"/>
    <property type="match status" value="1"/>
</dbReference>
<dbReference type="NCBIfam" id="TIGR01033">
    <property type="entry name" value="YebC/PmpR family DNA-binding transcriptional regulator"/>
    <property type="match status" value="1"/>
</dbReference>
<dbReference type="PANTHER" id="PTHR12532:SF6">
    <property type="entry name" value="TRANSCRIPTIONAL REGULATORY PROTEIN YEBC-RELATED"/>
    <property type="match status" value="1"/>
</dbReference>
<dbReference type="PANTHER" id="PTHR12532">
    <property type="entry name" value="TRANSLATIONAL ACTIVATOR OF CYTOCHROME C OXIDASE 1"/>
    <property type="match status" value="1"/>
</dbReference>
<dbReference type="Pfam" id="PF20772">
    <property type="entry name" value="TACO1_YebC_N"/>
    <property type="match status" value="1"/>
</dbReference>
<dbReference type="Pfam" id="PF01709">
    <property type="entry name" value="Transcrip_reg"/>
    <property type="match status" value="1"/>
</dbReference>
<dbReference type="SUPFAM" id="SSF75625">
    <property type="entry name" value="YebC-like"/>
    <property type="match status" value="1"/>
</dbReference>
<evidence type="ECO:0000255" key="1">
    <source>
        <dbReference type="HAMAP-Rule" id="MF_00693"/>
    </source>
</evidence>
<proteinExistence type="inferred from homology"/>
<accession>A8GFJ0</accession>
<gene>
    <name type="ordered locus">Spro_2779</name>
</gene>
<comment type="subcellular location">
    <subcellularLocation>
        <location evidence="1">Cytoplasm</location>
    </subcellularLocation>
</comment>
<comment type="similarity">
    <text evidence="1">Belongs to the TACO1 family.</text>
</comment>
<organism>
    <name type="scientific">Serratia proteamaculans (strain 568)</name>
    <dbReference type="NCBI Taxonomy" id="399741"/>
    <lineage>
        <taxon>Bacteria</taxon>
        <taxon>Pseudomonadati</taxon>
        <taxon>Pseudomonadota</taxon>
        <taxon>Gammaproteobacteria</taxon>
        <taxon>Enterobacterales</taxon>
        <taxon>Yersiniaceae</taxon>
        <taxon>Serratia</taxon>
    </lineage>
</organism>
<protein>
    <recommendedName>
        <fullName evidence="1">Probable transcriptional regulatory protein Spro_2779</fullName>
    </recommendedName>
</protein>
<keyword id="KW-0963">Cytoplasm</keyword>
<keyword id="KW-0238">DNA-binding</keyword>
<keyword id="KW-0804">Transcription</keyword>
<keyword id="KW-0805">Transcription regulation</keyword>
<reference key="1">
    <citation type="submission" date="2007-09" db="EMBL/GenBank/DDBJ databases">
        <title>Complete sequence of chromosome of Serratia proteamaculans 568.</title>
        <authorList>
            <consortium name="US DOE Joint Genome Institute"/>
            <person name="Copeland A."/>
            <person name="Lucas S."/>
            <person name="Lapidus A."/>
            <person name="Barry K."/>
            <person name="Glavina del Rio T."/>
            <person name="Dalin E."/>
            <person name="Tice H."/>
            <person name="Pitluck S."/>
            <person name="Chain P."/>
            <person name="Malfatti S."/>
            <person name="Shin M."/>
            <person name="Vergez L."/>
            <person name="Schmutz J."/>
            <person name="Larimer F."/>
            <person name="Land M."/>
            <person name="Hauser L."/>
            <person name="Kyrpides N."/>
            <person name="Kim E."/>
            <person name="Taghavi S."/>
            <person name="Newman L."/>
            <person name="Vangronsveld J."/>
            <person name="van der Lelie D."/>
            <person name="Richardson P."/>
        </authorList>
    </citation>
    <scope>NUCLEOTIDE SEQUENCE [LARGE SCALE GENOMIC DNA]</scope>
    <source>
        <strain>568</strain>
    </source>
</reference>
<sequence length="247" mass="26406">MAGHSKWANTKHRKAAQDSKRGKIFTKIIRELVTAAKLGGGDPGANPRLRAAIDKALSNNMTRDTLNRAIARGVGGDDDSNMETIIYEGYGPGGTAVMIECLSDNRNRTVAEVRHAFTKCGGNLGTDGSVAYLFTKKGVITYAPGLDEDVVMEAALEAGAEDIVSYDDGVIDVFTAWENLGEVKDALTAAGFTADSAEVSMIPSTKADMDEETAPKLLRLIDMLEDCDDVQEVYHNGEISDEVAATL</sequence>
<name>Y2779_SERP5</name>